<feature type="chain" id="PRO_0000085844" description="Mitosis inducer protein kinase cdr1">
    <location>
        <begin position="1"/>
        <end position="593"/>
    </location>
</feature>
<feature type="domain" description="Protein kinase" evidence="1">
    <location>
        <begin position="12"/>
        <end position="258"/>
    </location>
</feature>
<feature type="active site" description="Proton acceptor" evidence="1 2">
    <location>
        <position position="128"/>
    </location>
</feature>
<feature type="binding site" evidence="1">
    <location>
        <begin position="18"/>
        <end position="26"/>
    </location>
    <ligand>
        <name>ATP</name>
        <dbReference type="ChEBI" id="CHEBI:30616"/>
    </ligand>
</feature>
<feature type="binding site" evidence="1">
    <location>
        <position position="41"/>
    </location>
    <ligand>
        <name>ATP</name>
        <dbReference type="ChEBI" id="CHEBI:30616"/>
    </ligand>
</feature>
<feature type="modified residue" description="Phosphoserine" evidence="3">
    <location>
        <position position="550"/>
    </location>
</feature>
<feature type="sequence conflict" description="In Ref. 1; CAA40774/AAA35317." evidence="5" ref="1">
    <original>V</original>
    <variation>F</variation>
    <location>
        <position position="252"/>
    </location>
</feature>
<feature type="sequence conflict" description="In Ref. 1; CAA40774." evidence="5" ref="1">
    <original>A</original>
    <variation>I</variation>
    <location>
        <position position="570"/>
    </location>
</feature>
<gene>
    <name type="primary">cdr1</name>
    <name type="synonym">nim1</name>
    <name type="ORF">SPAC644.06c</name>
</gene>
<sequence length="593" mass="66955">MVKRHKNTIGVWRLGKTLGTGSTSCVRLAKHAKTGDLAAIKIIPIRYASIGMEILMMRLLRHPNILRLYDVWTDHQHMYLALEYVPDGELFHYIRKHGPLSEREAAHYLSQILDAVAHCHRFRFRHRDLKLENILIKVNEQQIKIADFGMATVEPNDSCLENYCGSLHYLAPEIVSHKPYRGAPADVWSCGVILYSLLSNKLPFGGQNTDVIYNKIRHGAYDLPSSISSAAQDLLHRMLDVNPSTRITIPEVFSHPFLMGCTSLSSMDSTTPPTPSLSIDEIDPLVVDCMCVLWKKSSSKKVVRRLQQRDDNDEKYVYKVLSEILRDDMLKKQRFDENKYLSLYDLIHDNNLFTKASISTTSLVKSNVSTNSRKSSNFEDELARRVSSPLSALNQMSQSPIPIRVSSDKDYDSYACHEVVSNPSTLDDDYNYMFVCPPEEYTYSTDNVRTDSLDLQSLPTPTLEQLESVPFNRYGYVRIFPSTTLSSTASGYYTPDSLSTPEPSIDGLTNLDDVQVGGFVQGSGNQNRRPISFPVISNMQPNITNVRSASAPLCSSPVPSRRYSQYATNARYTPRKVSSGSVLRKISSFFRKD</sequence>
<comment type="function">
    <text>This protein, a dose-dependent mitotic inducer, appears to function as a negative regulator of mitosis inhibitor wee1 by phosphorylating and inactivating it.</text>
</comment>
<comment type="catalytic activity">
    <reaction>
        <text>L-seryl-[protein] + ATP = O-phospho-L-seryl-[protein] + ADP + H(+)</text>
        <dbReference type="Rhea" id="RHEA:17989"/>
        <dbReference type="Rhea" id="RHEA-COMP:9863"/>
        <dbReference type="Rhea" id="RHEA-COMP:11604"/>
        <dbReference type="ChEBI" id="CHEBI:15378"/>
        <dbReference type="ChEBI" id="CHEBI:29999"/>
        <dbReference type="ChEBI" id="CHEBI:30616"/>
        <dbReference type="ChEBI" id="CHEBI:83421"/>
        <dbReference type="ChEBI" id="CHEBI:456216"/>
        <dbReference type="EC" id="2.7.11.1"/>
    </reaction>
</comment>
<comment type="catalytic activity">
    <reaction>
        <text>L-threonyl-[protein] + ATP = O-phospho-L-threonyl-[protein] + ADP + H(+)</text>
        <dbReference type="Rhea" id="RHEA:46608"/>
        <dbReference type="Rhea" id="RHEA-COMP:11060"/>
        <dbReference type="Rhea" id="RHEA-COMP:11605"/>
        <dbReference type="ChEBI" id="CHEBI:15378"/>
        <dbReference type="ChEBI" id="CHEBI:30013"/>
        <dbReference type="ChEBI" id="CHEBI:30616"/>
        <dbReference type="ChEBI" id="CHEBI:61977"/>
        <dbReference type="ChEBI" id="CHEBI:456216"/>
        <dbReference type="EC" id="2.7.11.1"/>
    </reaction>
</comment>
<comment type="subunit">
    <text evidence="4">Interacts with msp1.</text>
</comment>
<comment type="similarity">
    <text evidence="5">Belongs to the protein kinase superfamily. CAMK Ser/Thr protein kinase family. NIM1 subfamily.</text>
</comment>
<comment type="sequence caution" evidence="5">
    <conflict type="frameshift">
        <sequence resource="EMBL-CDS" id="AAA35317"/>
    </conflict>
</comment>
<name>CDR1_SCHPO</name>
<reference key="1">
    <citation type="journal article" date="1991" name="Genetics">
        <title>Genetic and molecular analysis of cdr1/nim1 in Schizosaccharomyces pombe.</title>
        <authorList>
            <person name="Feilotter H."/>
            <person name="Nurse P."/>
            <person name="Young P.G."/>
        </authorList>
    </citation>
    <scope>NUCLEOTIDE SEQUENCE [GENOMIC DNA]</scope>
</reference>
<reference key="2">
    <citation type="journal article" date="1987" name="Cell">
        <title>The mitotic inducer nim1+ functions in a regulatory network of protein kinase homologs controlling the initiation of mitosis.</title>
        <authorList>
            <person name="Russell P."/>
            <person name="Nurse P."/>
        </authorList>
    </citation>
    <scope>NUCLEOTIDE SEQUENCE [GENOMIC DNA]</scope>
</reference>
<reference key="3">
    <citation type="journal article" date="2002" name="Nature">
        <title>The genome sequence of Schizosaccharomyces pombe.</title>
        <authorList>
            <person name="Wood V."/>
            <person name="Gwilliam R."/>
            <person name="Rajandream M.A."/>
            <person name="Lyne M.H."/>
            <person name="Lyne R."/>
            <person name="Stewart A."/>
            <person name="Sgouros J.G."/>
            <person name="Peat N."/>
            <person name="Hayles J."/>
            <person name="Baker S.G."/>
            <person name="Basham D."/>
            <person name="Bowman S."/>
            <person name="Brooks K."/>
            <person name="Brown D."/>
            <person name="Brown S."/>
            <person name="Chillingworth T."/>
            <person name="Churcher C.M."/>
            <person name="Collins M."/>
            <person name="Connor R."/>
            <person name="Cronin A."/>
            <person name="Davis P."/>
            <person name="Feltwell T."/>
            <person name="Fraser A."/>
            <person name="Gentles S."/>
            <person name="Goble A."/>
            <person name="Hamlin N."/>
            <person name="Harris D.E."/>
            <person name="Hidalgo J."/>
            <person name="Hodgson G."/>
            <person name="Holroyd S."/>
            <person name="Hornsby T."/>
            <person name="Howarth S."/>
            <person name="Huckle E.J."/>
            <person name="Hunt S."/>
            <person name="Jagels K."/>
            <person name="James K.D."/>
            <person name="Jones L."/>
            <person name="Jones M."/>
            <person name="Leather S."/>
            <person name="McDonald S."/>
            <person name="McLean J."/>
            <person name="Mooney P."/>
            <person name="Moule S."/>
            <person name="Mungall K.L."/>
            <person name="Murphy L.D."/>
            <person name="Niblett D."/>
            <person name="Odell C."/>
            <person name="Oliver K."/>
            <person name="O'Neil S."/>
            <person name="Pearson D."/>
            <person name="Quail M.A."/>
            <person name="Rabbinowitsch E."/>
            <person name="Rutherford K.M."/>
            <person name="Rutter S."/>
            <person name="Saunders D."/>
            <person name="Seeger K."/>
            <person name="Sharp S."/>
            <person name="Skelton J."/>
            <person name="Simmonds M.N."/>
            <person name="Squares R."/>
            <person name="Squares S."/>
            <person name="Stevens K."/>
            <person name="Taylor K."/>
            <person name="Taylor R.G."/>
            <person name="Tivey A."/>
            <person name="Walsh S.V."/>
            <person name="Warren T."/>
            <person name="Whitehead S."/>
            <person name="Woodward J.R."/>
            <person name="Volckaert G."/>
            <person name="Aert R."/>
            <person name="Robben J."/>
            <person name="Grymonprez B."/>
            <person name="Weltjens I."/>
            <person name="Vanstreels E."/>
            <person name="Rieger M."/>
            <person name="Schaefer M."/>
            <person name="Mueller-Auer S."/>
            <person name="Gabel C."/>
            <person name="Fuchs M."/>
            <person name="Duesterhoeft A."/>
            <person name="Fritzc C."/>
            <person name="Holzer E."/>
            <person name="Moestl D."/>
            <person name="Hilbert H."/>
            <person name="Borzym K."/>
            <person name="Langer I."/>
            <person name="Beck A."/>
            <person name="Lehrach H."/>
            <person name="Reinhardt R."/>
            <person name="Pohl T.M."/>
            <person name="Eger P."/>
            <person name="Zimmermann W."/>
            <person name="Wedler H."/>
            <person name="Wambutt R."/>
            <person name="Purnelle B."/>
            <person name="Goffeau A."/>
            <person name="Cadieu E."/>
            <person name="Dreano S."/>
            <person name="Gloux S."/>
            <person name="Lelaure V."/>
            <person name="Mottier S."/>
            <person name="Galibert F."/>
            <person name="Aves S.J."/>
            <person name="Xiang Z."/>
            <person name="Hunt C."/>
            <person name="Moore K."/>
            <person name="Hurst S.M."/>
            <person name="Lucas M."/>
            <person name="Rochet M."/>
            <person name="Gaillardin C."/>
            <person name="Tallada V.A."/>
            <person name="Garzon A."/>
            <person name="Thode G."/>
            <person name="Daga R.R."/>
            <person name="Cruzado L."/>
            <person name="Jimenez J."/>
            <person name="Sanchez M."/>
            <person name="del Rey F."/>
            <person name="Benito J."/>
            <person name="Dominguez A."/>
            <person name="Revuelta J.L."/>
            <person name="Moreno S."/>
            <person name="Armstrong J."/>
            <person name="Forsburg S.L."/>
            <person name="Cerutti L."/>
            <person name="Lowe T."/>
            <person name="McCombie W.R."/>
            <person name="Paulsen I."/>
            <person name="Potashkin J."/>
            <person name="Shpakovski G.V."/>
            <person name="Ussery D."/>
            <person name="Barrell B.G."/>
            <person name="Nurse P."/>
        </authorList>
    </citation>
    <scope>NUCLEOTIDE SEQUENCE [LARGE SCALE GENOMIC DNA]</scope>
    <source>
        <strain>972 / ATCC 24843</strain>
    </source>
</reference>
<reference key="4">
    <citation type="journal article" date="2008" name="J. Proteome Res.">
        <title>Phosphoproteome analysis of fission yeast.</title>
        <authorList>
            <person name="Wilson-Grady J.T."/>
            <person name="Villen J."/>
            <person name="Gygi S.P."/>
        </authorList>
    </citation>
    <scope>PHOSPHORYLATION [LARGE SCALE ANALYSIS] AT SER-550</scope>
    <scope>IDENTIFICATION BY MASS SPECTROMETRY</scope>
</reference>
<reference key="5">
    <citation type="journal article" date="1999" name="FEBS Lett.">
        <title>Interaction between the fission yeast nim1/cdr1 protein kinase and a dynamin-related protein.</title>
        <authorList>
            <person name="Pelloquin L."/>
            <person name="Ducommun B."/>
            <person name="Belenguer P."/>
        </authorList>
    </citation>
    <scope>INTERACTION WITH MSP1</scope>
</reference>
<proteinExistence type="evidence at protein level"/>
<evidence type="ECO:0000255" key="1">
    <source>
        <dbReference type="PROSITE-ProRule" id="PRU00159"/>
    </source>
</evidence>
<evidence type="ECO:0000255" key="2">
    <source>
        <dbReference type="PROSITE-ProRule" id="PRU10027"/>
    </source>
</evidence>
<evidence type="ECO:0000269" key="3">
    <source>
    </source>
</evidence>
<evidence type="ECO:0000269" key="4">
    <source>
    </source>
</evidence>
<evidence type="ECO:0000305" key="5"/>
<accession>P07334</accession>
<accession>Q9P6Q4</accession>
<keyword id="KW-0067">ATP-binding</keyword>
<keyword id="KW-0131">Cell cycle</keyword>
<keyword id="KW-0132">Cell division</keyword>
<keyword id="KW-0418">Kinase</keyword>
<keyword id="KW-0498">Mitosis</keyword>
<keyword id="KW-0547">Nucleotide-binding</keyword>
<keyword id="KW-0597">Phosphoprotein</keyword>
<keyword id="KW-1185">Reference proteome</keyword>
<keyword id="KW-0723">Serine/threonine-protein kinase</keyword>
<keyword id="KW-0808">Transferase</keyword>
<protein>
    <recommendedName>
        <fullName>Mitosis inducer protein kinase cdr1</fullName>
        <ecNumber>2.7.11.1</ecNumber>
    </recommendedName>
    <alternativeName>
        <fullName>Protein kinase nim1</fullName>
    </alternativeName>
</protein>
<organism>
    <name type="scientific">Schizosaccharomyces pombe (strain 972 / ATCC 24843)</name>
    <name type="common">Fission yeast</name>
    <dbReference type="NCBI Taxonomy" id="284812"/>
    <lineage>
        <taxon>Eukaryota</taxon>
        <taxon>Fungi</taxon>
        <taxon>Dikarya</taxon>
        <taxon>Ascomycota</taxon>
        <taxon>Taphrinomycotina</taxon>
        <taxon>Schizosaccharomycetes</taxon>
        <taxon>Schizosaccharomycetales</taxon>
        <taxon>Schizosaccharomycetaceae</taxon>
        <taxon>Schizosaccharomyces</taxon>
    </lineage>
</organism>
<dbReference type="EC" id="2.7.11.1"/>
<dbReference type="EMBL" id="X57549">
    <property type="protein sequence ID" value="CAA40774.1"/>
    <property type="molecule type" value="Genomic_DNA"/>
</dbReference>
<dbReference type="EMBL" id="M16509">
    <property type="protein sequence ID" value="AAA35317.1"/>
    <property type="status" value="ALT_FRAME"/>
    <property type="molecule type" value="Genomic_DNA"/>
</dbReference>
<dbReference type="EMBL" id="CU329670">
    <property type="protein sequence ID" value="CAB90133.1"/>
    <property type="molecule type" value="Genomic_DNA"/>
</dbReference>
<dbReference type="PIR" id="S16153">
    <property type="entry name" value="KIZPMN"/>
</dbReference>
<dbReference type="RefSeq" id="NP_593874.1">
    <property type="nucleotide sequence ID" value="NM_001019304.2"/>
</dbReference>
<dbReference type="SMR" id="P07334"/>
<dbReference type="BioGRID" id="280080">
    <property type="interactions" value="46"/>
</dbReference>
<dbReference type="FunCoup" id="P07334">
    <property type="interactions" value="297"/>
</dbReference>
<dbReference type="STRING" id="284812.P07334"/>
<dbReference type="iPTMnet" id="P07334"/>
<dbReference type="PaxDb" id="4896-SPAC644.06c.1"/>
<dbReference type="EnsemblFungi" id="SPAC644.06c.1">
    <property type="protein sequence ID" value="SPAC644.06c.1:pep"/>
    <property type="gene ID" value="SPAC644.06c"/>
</dbReference>
<dbReference type="GeneID" id="2543666"/>
<dbReference type="KEGG" id="spo:2543666"/>
<dbReference type="PomBase" id="SPAC644.06c">
    <property type="gene designation" value="cdr1"/>
</dbReference>
<dbReference type="VEuPathDB" id="FungiDB:SPAC644.06c"/>
<dbReference type="eggNOG" id="KOG0588">
    <property type="taxonomic scope" value="Eukaryota"/>
</dbReference>
<dbReference type="HOGENOM" id="CLU_465517_0_0_1"/>
<dbReference type="InParanoid" id="P07334"/>
<dbReference type="PhylomeDB" id="P07334"/>
<dbReference type="BRENDA" id="2.7.11.1">
    <property type="organism ID" value="5613"/>
</dbReference>
<dbReference type="PRO" id="PR:P07334"/>
<dbReference type="Proteomes" id="UP000002485">
    <property type="component" value="Chromosome I"/>
</dbReference>
<dbReference type="GO" id="GO:0110115">
    <property type="term" value="C:Cdr2 medial cortical node complex"/>
    <property type="evidence" value="ECO:0000269"/>
    <property type="project" value="PomBase"/>
</dbReference>
<dbReference type="GO" id="GO:0032153">
    <property type="term" value="C:cell division site"/>
    <property type="evidence" value="ECO:0007005"/>
    <property type="project" value="PomBase"/>
</dbReference>
<dbReference type="GO" id="GO:0005737">
    <property type="term" value="C:cytoplasm"/>
    <property type="evidence" value="ECO:0000318"/>
    <property type="project" value="GO_Central"/>
</dbReference>
<dbReference type="GO" id="GO:0005829">
    <property type="term" value="C:cytosol"/>
    <property type="evidence" value="ECO:0007005"/>
    <property type="project" value="PomBase"/>
</dbReference>
<dbReference type="GO" id="GO:0071341">
    <property type="term" value="C:medial cortical node"/>
    <property type="evidence" value="ECO:0000314"/>
    <property type="project" value="PomBase"/>
</dbReference>
<dbReference type="GO" id="GO:0005634">
    <property type="term" value="C:nucleus"/>
    <property type="evidence" value="ECO:0007005"/>
    <property type="project" value="PomBase"/>
</dbReference>
<dbReference type="GO" id="GO:0005524">
    <property type="term" value="F:ATP binding"/>
    <property type="evidence" value="ECO:0000255"/>
    <property type="project" value="PomBase"/>
</dbReference>
<dbReference type="GO" id="GO:0004672">
    <property type="term" value="F:protein kinase activity"/>
    <property type="evidence" value="ECO:0000314"/>
    <property type="project" value="PomBase"/>
</dbReference>
<dbReference type="GO" id="GO:0106310">
    <property type="term" value="F:protein serine kinase activity"/>
    <property type="evidence" value="ECO:0007669"/>
    <property type="project" value="RHEA"/>
</dbReference>
<dbReference type="GO" id="GO:0004674">
    <property type="term" value="F:protein serine/threonine kinase activity"/>
    <property type="evidence" value="ECO:0000314"/>
    <property type="project" value="PomBase"/>
</dbReference>
<dbReference type="GO" id="GO:0004712">
    <property type="term" value="F:protein serine/threonine/tyrosine kinase activity"/>
    <property type="evidence" value="ECO:0000314"/>
    <property type="project" value="PomBase"/>
</dbReference>
<dbReference type="GO" id="GO:0051301">
    <property type="term" value="P:cell division"/>
    <property type="evidence" value="ECO:0007669"/>
    <property type="project" value="UniProtKB-KW"/>
</dbReference>
<dbReference type="GO" id="GO:0000086">
    <property type="term" value="P:G2/M transition of mitotic cell cycle"/>
    <property type="evidence" value="ECO:0000318"/>
    <property type="project" value="GO_Central"/>
</dbReference>
<dbReference type="GO" id="GO:0010971">
    <property type="term" value="P:positive regulation of G2/M transition of mitotic cell cycle"/>
    <property type="evidence" value="ECO:0000315"/>
    <property type="project" value="PomBase"/>
</dbReference>
<dbReference type="GO" id="GO:0023052">
    <property type="term" value="P:signaling"/>
    <property type="evidence" value="ECO:0000303"/>
    <property type="project" value="PomBase"/>
</dbReference>
<dbReference type="CDD" id="cd14081">
    <property type="entry name" value="STKc_BRSK1_2"/>
    <property type="match status" value="1"/>
</dbReference>
<dbReference type="FunFam" id="1.10.510.10:FF:000571">
    <property type="entry name" value="Maternal embryonic leucine zipper kinase"/>
    <property type="match status" value="1"/>
</dbReference>
<dbReference type="Gene3D" id="1.10.510.10">
    <property type="entry name" value="Transferase(Phosphotransferase) domain 1"/>
    <property type="match status" value="1"/>
</dbReference>
<dbReference type="InterPro" id="IPR011009">
    <property type="entry name" value="Kinase-like_dom_sf"/>
</dbReference>
<dbReference type="InterPro" id="IPR000719">
    <property type="entry name" value="Prot_kinase_dom"/>
</dbReference>
<dbReference type="InterPro" id="IPR017441">
    <property type="entry name" value="Protein_kinase_ATP_BS"/>
</dbReference>
<dbReference type="InterPro" id="IPR008271">
    <property type="entry name" value="Ser/Thr_kinase_AS"/>
</dbReference>
<dbReference type="PANTHER" id="PTHR24346">
    <property type="entry name" value="MAP/MICROTUBULE AFFINITY-REGULATING KINASE"/>
    <property type="match status" value="1"/>
</dbReference>
<dbReference type="PANTHER" id="PTHR24346:SF110">
    <property type="entry name" value="NON-SPECIFIC SERINE_THREONINE PROTEIN KINASE"/>
    <property type="match status" value="1"/>
</dbReference>
<dbReference type="Pfam" id="PF00069">
    <property type="entry name" value="Pkinase"/>
    <property type="match status" value="1"/>
</dbReference>
<dbReference type="SMART" id="SM00220">
    <property type="entry name" value="S_TKc"/>
    <property type="match status" value="1"/>
</dbReference>
<dbReference type="SUPFAM" id="SSF56112">
    <property type="entry name" value="Protein kinase-like (PK-like)"/>
    <property type="match status" value="1"/>
</dbReference>
<dbReference type="PROSITE" id="PS00107">
    <property type="entry name" value="PROTEIN_KINASE_ATP"/>
    <property type="match status" value="1"/>
</dbReference>
<dbReference type="PROSITE" id="PS50011">
    <property type="entry name" value="PROTEIN_KINASE_DOM"/>
    <property type="match status" value="1"/>
</dbReference>
<dbReference type="PROSITE" id="PS00108">
    <property type="entry name" value="PROTEIN_KINASE_ST"/>
    <property type="match status" value="1"/>
</dbReference>